<reference key="1">
    <citation type="submission" date="2007-04" db="EMBL/GenBank/DDBJ databases">
        <title>Complete sequence of Roseiflexus sp. RS-1.</title>
        <authorList>
            <consortium name="US DOE Joint Genome Institute"/>
            <person name="Copeland A."/>
            <person name="Lucas S."/>
            <person name="Lapidus A."/>
            <person name="Barry K."/>
            <person name="Detter J.C."/>
            <person name="Glavina del Rio T."/>
            <person name="Hammon N."/>
            <person name="Israni S."/>
            <person name="Dalin E."/>
            <person name="Tice H."/>
            <person name="Pitluck S."/>
            <person name="Chertkov O."/>
            <person name="Brettin T."/>
            <person name="Bruce D."/>
            <person name="Han C."/>
            <person name="Schmutz J."/>
            <person name="Larimer F."/>
            <person name="Land M."/>
            <person name="Hauser L."/>
            <person name="Kyrpides N."/>
            <person name="Mikhailova N."/>
            <person name="Bryant D.A."/>
            <person name="Richardson P."/>
        </authorList>
    </citation>
    <scope>NUCLEOTIDE SEQUENCE [LARGE SCALE GENOMIC DNA]</scope>
    <source>
        <strain>RS-1</strain>
    </source>
</reference>
<protein>
    <recommendedName>
        <fullName evidence="1">S-adenosylmethionine synthase</fullName>
        <shortName evidence="1">AdoMet synthase</shortName>
        <ecNumber evidence="1">2.5.1.6</ecNumber>
    </recommendedName>
    <alternativeName>
        <fullName evidence="1">MAT</fullName>
    </alternativeName>
    <alternativeName>
        <fullName evidence="1">Methionine adenosyltransferase</fullName>
    </alternativeName>
</protein>
<keyword id="KW-0067">ATP-binding</keyword>
<keyword id="KW-0963">Cytoplasm</keyword>
<keyword id="KW-0460">Magnesium</keyword>
<keyword id="KW-0479">Metal-binding</keyword>
<keyword id="KW-0547">Nucleotide-binding</keyword>
<keyword id="KW-0554">One-carbon metabolism</keyword>
<keyword id="KW-0630">Potassium</keyword>
<keyword id="KW-0808">Transferase</keyword>
<evidence type="ECO:0000255" key="1">
    <source>
        <dbReference type="HAMAP-Rule" id="MF_00086"/>
    </source>
</evidence>
<feature type="chain" id="PRO_1000071242" description="S-adenosylmethionine synthase">
    <location>
        <begin position="1"/>
        <end position="405"/>
    </location>
</feature>
<feature type="region of interest" description="Flexible loop" evidence="1">
    <location>
        <begin position="107"/>
        <end position="117"/>
    </location>
</feature>
<feature type="binding site" description="in other chain" evidence="1">
    <location>
        <position position="22"/>
    </location>
    <ligand>
        <name>ATP</name>
        <dbReference type="ChEBI" id="CHEBI:30616"/>
        <note>ligand shared between two neighboring subunits</note>
    </ligand>
</feature>
<feature type="binding site" evidence="1">
    <location>
        <position position="24"/>
    </location>
    <ligand>
        <name>Mg(2+)</name>
        <dbReference type="ChEBI" id="CHEBI:18420"/>
    </ligand>
</feature>
<feature type="binding site" evidence="1">
    <location>
        <position position="50"/>
    </location>
    <ligand>
        <name>K(+)</name>
        <dbReference type="ChEBI" id="CHEBI:29103"/>
    </ligand>
</feature>
<feature type="binding site" description="in other chain" evidence="1">
    <location>
        <position position="63"/>
    </location>
    <ligand>
        <name>L-methionine</name>
        <dbReference type="ChEBI" id="CHEBI:57844"/>
        <note>ligand shared between two neighboring subunits</note>
    </ligand>
</feature>
<feature type="binding site" description="in other chain" evidence="1">
    <location>
        <position position="107"/>
    </location>
    <ligand>
        <name>L-methionine</name>
        <dbReference type="ChEBI" id="CHEBI:57844"/>
        <note>ligand shared between two neighboring subunits</note>
    </ligand>
</feature>
<feature type="binding site" description="in other chain" evidence="1">
    <location>
        <begin position="184"/>
        <end position="186"/>
    </location>
    <ligand>
        <name>ATP</name>
        <dbReference type="ChEBI" id="CHEBI:30616"/>
        <note>ligand shared between two neighboring subunits</note>
    </ligand>
</feature>
<feature type="binding site" description="in other chain" evidence="1">
    <location>
        <begin position="250"/>
        <end position="251"/>
    </location>
    <ligand>
        <name>ATP</name>
        <dbReference type="ChEBI" id="CHEBI:30616"/>
        <note>ligand shared between two neighboring subunits</note>
    </ligand>
</feature>
<feature type="binding site" evidence="1">
    <location>
        <position position="259"/>
    </location>
    <ligand>
        <name>ATP</name>
        <dbReference type="ChEBI" id="CHEBI:30616"/>
        <note>ligand shared between two neighboring subunits</note>
    </ligand>
</feature>
<feature type="binding site" evidence="1">
    <location>
        <position position="259"/>
    </location>
    <ligand>
        <name>L-methionine</name>
        <dbReference type="ChEBI" id="CHEBI:57844"/>
        <note>ligand shared between two neighboring subunits</note>
    </ligand>
</feature>
<feature type="binding site" description="in other chain" evidence="1">
    <location>
        <begin position="265"/>
        <end position="266"/>
    </location>
    <ligand>
        <name>ATP</name>
        <dbReference type="ChEBI" id="CHEBI:30616"/>
        <note>ligand shared between two neighboring subunits</note>
    </ligand>
</feature>
<feature type="binding site" evidence="1">
    <location>
        <position position="282"/>
    </location>
    <ligand>
        <name>ATP</name>
        <dbReference type="ChEBI" id="CHEBI:30616"/>
        <note>ligand shared between two neighboring subunits</note>
    </ligand>
</feature>
<feature type="binding site" evidence="1">
    <location>
        <position position="286"/>
    </location>
    <ligand>
        <name>ATP</name>
        <dbReference type="ChEBI" id="CHEBI:30616"/>
        <note>ligand shared between two neighboring subunits</note>
    </ligand>
</feature>
<feature type="binding site" description="in other chain" evidence="1">
    <location>
        <position position="290"/>
    </location>
    <ligand>
        <name>L-methionine</name>
        <dbReference type="ChEBI" id="CHEBI:57844"/>
        <note>ligand shared between two neighboring subunits</note>
    </ligand>
</feature>
<name>METK_ROSS1</name>
<gene>
    <name evidence="1" type="primary">metK</name>
    <name type="ordered locus">RoseRS_0489</name>
</gene>
<dbReference type="EC" id="2.5.1.6" evidence="1"/>
<dbReference type="EMBL" id="CP000686">
    <property type="protein sequence ID" value="ABQ88913.1"/>
    <property type="molecule type" value="Genomic_DNA"/>
</dbReference>
<dbReference type="RefSeq" id="WP_011955270.1">
    <property type="nucleotide sequence ID" value="NC_009523.1"/>
</dbReference>
<dbReference type="SMR" id="A5UQL0"/>
<dbReference type="STRING" id="357808.RoseRS_0489"/>
<dbReference type="KEGG" id="rrs:RoseRS_0489"/>
<dbReference type="eggNOG" id="COG0192">
    <property type="taxonomic scope" value="Bacteria"/>
</dbReference>
<dbReference type="HOGENOM" id="CLU_041802_1_1_0"/>
<dbReference type="OrthoDB" id="9801686at2"/>
<dbReference type="UniPathway" id="UPA00315">
    <property type="reaction ID" value="UER00080"/>
</dbReference>
<dbReference type="Proteomes" id="UP000006554">
    <property type="component" value="Chromosome"/>
</dbReference>
<dbReference type="GO" id="GO:0005737">
    <property type="term" value="C:cytoplasm"/>
    <property type="evidence" value="ECO:0007669"/>
    <property type="project" value="UniProtKB-SubCell"/>
</dbReference>
<dbReference type="GO" id="GO:0005524">
    <property type="term" value="F:ATP binding"/>
    <property type="evidence" value="ECO:0007669"/>
    <property type="project" value="UniProtKB-UniRule"/>
</dbReference>
<dbReference type="GO" id="GO:0000287">
    <property type="term" value="F:magnesium ion binding"/>
    <property type="evidence" value="ECO:0007669"/>
    <property type="project" value="UniProtKB-UniRule"/>
</dbReference>
<dbReference type="GO" id="GO:0004478">
    <property type="term" value="F:methionine adenosyltransferase activity"/>
    <property type="evidence" value="ECO:0007669"/>
    <property type="project" value="UniProtKB-UniRule"/>
</dbReference>
<dbReference type="GO" id="GO:0006730">
    <property type="term" value="P:one-carbon metabolic process"/>
    <property type="evidence" value="ECO:0007669"/>
    <property type="project" value="UniProtKB-KW"/>
</dbReference>
<dbReference type="GO" id="GO:0006556">
    <property type="term" value="P:S-adenosylmethionine biosynthetic process"/>
    <property type="evidence" value="ECO:0007669"/>
    <property type="project" value="UniProtKB-UniRule"/>
</dbReference>
<dbReference type="CDD" id="cd18079">
    <property type="entry name" value="S-AdoMet_synt"/>
    <property type="match status" value="1"/>
</dbReference>
<dbReference type="FunFam" id="3.30.300.10:FF:000003">
    <property type="entry name" value="S-adenosylmethionine synthase"/>
    <property type="match status" value="1"/>
</dbReference>
<dbReference type="FunFam" id="3.30.300.10:FF:000004">
    <property type="entry name" value="S-adenosylmethionine synthase"/>
    <property type="match status" value="1"/>
</dbReference>
<dbReference type="Gene3D" id="3.30.300.10">
    <property type="match status" value="3"/>
</dbReference>
<dbReference type="HAMAP" id="MF_00086">
    <property type="entry name" value="S_AdoMet_synth1"/>
    <property type="match status" value="1"/>
</dbReference>
<dbReference type="InterPro" id="IPR022631">
    <property type="entry name" value="ADOMET_SYNTHASE_CS"/>
</dbReference>
<dbReference type="InterPro" id="IPR022630">
    <property type="entry name" value="S-AdoMet_synt_C"/>
</dbReference>
<dbReference type="InterPro" id="IPR022629">
    <property type="entry name" value="S-AdoMet_synt_central"/>
</dbReference>
<dbReference type="InterPro" id="IPR022628">
    <property type="entry name" value="S-AdoMet_synt_N"/>
</dbReference>
<dbReference type="InterPro" id="IPR002133">
    <property type="entry name" value="S-AdoMet_synthetase"/>
</dbReference>
<dbReference type="InterPro" id="IPR022636">
    <property type="entry name" value="S-AdoMet_synthetase_sfam"/>
</dbReference>
<dbReference type="NCBIfam" id="TIGR01034">
    <property type="entry name" value="metK"/>
    <property type="match status" value="1"/>
</dbReference>
<dbReference type="PANTHER" id="PTHR11964">
    <property type="entry name" value="S-ADENOSYLMETHIONINE SYNTHETASE"/>
    <property type="match status" value="1"/>
</dbReference>
<dbReference type="Pfam" id="PF02773">
    <property type="entry name" value="S-AdoMet_synt_C"/>
    <property type="match status" value="1"/>
</dbReference>
<dbReference type="Pfam" id="PF02772">
    <property type="entry name" value="S-AdoMet_synt_M"/>
    <property type="match status" value="1"/>
</dbReference>
<dbReference type="Pfam" id="PF00438">
    <property type="entry name" value="S-AdoMet_synt_N"/>
    <property type="match status" value="1"/>
</dbReference>
<dbReference type="PIRSF" id="PIRSF000497">
    <property type="entry name" value="MAT"/>
    <property type="match status" value="1"/>
</dbReference>
<dbReference type="SUPFAM" id="SSF55973">
    <property type="entry name" value="S-adenosylmethionine synthetase"/>
    <property type="match status" value="3"/>
</dbReference>
<dbReference type="PROSITE" id="PS00376">
    <property type="entry name" value="ADOMET_SYNTHASE_1"/>
    <property type="match status" value="1"/>
</dbReference>
<dbReference type="PROSITE" id="PS00377">
    <property type="entry name" value="ADOMET_SYNTHASE_2"/>
    <property type="match status" value="1"/>
</dbReference>
<proteinExistence type="inferred from homology"/>
<comment type="function">
    <text evidence="1">Catalyzes the formation of S-adenosylmethionine (AdoMet) from methionine and ATP. The overall synthetic reaction is composed of two sequential steps, AdoMet formation and the subsequent tripolyphosphate hydrolysis which occurs prior to release of AdoMet from the enzyme.</text>
</comment>
<comment type="catalytic activity">
    <reaction evidence="1">
        <text>L-methionine + ATP + H2O = S-adenosyl-L-methionine + phosphate + diphosphate</text>
        <dbReference type="Rhea" id="RHEA:21080"/>
        <dbReference type="ChEBI" id="CHEBI:15377"/>
        <dbReference type="ChEBI" id="CHEBI:30616"/>
        <dbReference type="ChEBI" id="CHEBI:33019"/>
        <dbReference type="ChEBI" id="CHEBI:43474"/>
        <dbReference type="ChEBI" id="CHEBI:57844"/>
        <dbReference type="ChEBI" id="CHEBI:59789"/>
        <dbReference type="EC" id="2.5.1.6"/>
    </reaction>
</comment>
<comment type="cofactor">
    <cofactor evidence="1">
        <name>Mg(2+)</name>
        <dbReference type="ChEBI" id="CHEBI:18420"/>
    </cofactor>
    <text evidence="1">Binds 2 divalent ions per subunit.</text>
</comment>
<comment type="cofactor">
    <cofactor evidence="1">
        <name>K(+)</name>
        <dbReference type="ChEBI" id="CHEBI:29103"/>
    </cofactor>
    <text evidence="1">Binds 1 potassium ion per subunit.</text>
</comment>
<comment type="pathway">
    <text evidence="1">Amino-acid biosynthesis; S-adenosyl-L-methionine biosynthesis; S-adenosyl-L-methionine from L-methionine: step 1/1.</text>
</comment>
<comment type="subunit">
    <text evidence="1">Homotetramer; dimer of dimers.</text>
</comment>
<comment type="subcellular location">
    <subcellularLocation>
        <location evidence="1">Cytoplasm</location>
    </subcellularLocation>
</comment>
<comment type="similarity">
    <text evidence="1">Belongs to the AdoMet synthase family.</text>
</comment>
<accession>A5UQL0</accession>
<organism>
    <name type="scientific">Roseiflexus sp. (strain RS-1)</name>
    <dbReference type="NCBI Taxonomy" id="357808"/>
    <lineage>
        <taxon>Bacteria</taxon>
        <taxon>Bacillati</taxon>
        <taxon>Chloroflexota</taxon>
        <taxon>Chloroflexia</taxon>
        <taxon>Chloroflexales</taxon>
        <taxon>Roseiflexineae</taxon>
        <taxon>Roseiflexaceae</taxon>
        <taxon>Roseiflexus</taxon>
    </lineage>
</organism>
<sequence length="405" mass="44370">MSTSFMKSPRLFFTSESVTEGHPDKICDQVSDAVLDAFLTHDPRARVACETATTTGLIVVIGEVTYEQGYIPIEEIVRKTVKDIGYTDASYGFDADTCGVMVAIHGQSPDIAQGVDRALEVRGDGYVTDEEVATIGAGDQGMMFGFACNETPELMPLPIALAHRIGRRLSRLRKEGVLPYLRPDGKSQVTVEYSYGRPVRVDTVLVSNQHAPDVTQDQIRHDIIHQVIHAVVPPELIDEKTKYFVNPTGRFVIGGPMGDSGLTGRKIIVDTYGGMARHGGGAFSGKDPTKVDRSAAYACRWVAKNVVAAGLADRFEIQVAYAIGVAHPLSISVECFGTNKVSEETILRLINEHFDLRPGAIIRDLRLRRPIYRPTAAYGHFGRDDIDAPWEQTDRAEALRRAAGL</sequence>